<dbReference type="EC" id="3.5.1.135" evidence="2"/>
<dbReference type="EMBL" id="CP000444">
    <property type="protein sequence ID" value="ABI42693.1"/>
    <property type="molecule type" value="Genomic_DNA"/>
</dbReference>
<dbReference type="SMR" id="Q0HW12"/>
<dbReference type="KEGG" id="shm:Shewmr7_1700"/>
<dbReference type="HOGENOM" id="CLU_152586_0_0_6"/>
<dbReference type="GO" id="GO:0005829">
    <property type="term" value="C:cytosol"/>
    <property type="evidence" value="ECO:0007669"/>
    <property type="project" value="TreeGrafter"/>
</dbReference>
<dbReference type="GO" id="GO:0016813">
    <property type="term" value="F:hydrolase activity, acting on carbon-nitrogen (but not peptide) bonds, in linear amidines"/>
    <property type="evidence" value="ECO:0007669"/>
    <property type="project" value="UniProtKB-UniRule"/>
</dbReference>
<dbReference type="GO" id="GO:0106251">
    <property type="term" value="F:N4-acetylcytidine amidohydrolase activity"/>
    <property type="evidence" value="ECO:0007669"/>
    <property type="project" value="RHEA"/>
</dbReference>
<dbReference type="CDD" id="cd06552">
    <property type="entry name" value="ASCH_yqfb_like"/>
    <property type="match status" value="1"/>
</dbReference>
<dbReference type="Gene3D" id="2.30.130.30">
    <property type="entry name" value="Hypothetical protein"/>
    <property type="match status" value="1"/>
</dbReference>
<dbReference type="HAMAP" id="MF_00684">
    <property type="entry name" value="ac4C_amidohydr"/>
    <property type="match status" value="1"/>
</dbReference>
<dbReference type="InterPro" id="IPR008314">
    <property type="entry name" value="AC4CH"/>
</dbReference>
<dbReference type="InterPro" id="IPR007374">
    <property type="entry name" value="ASCH_domain"/>
</dbReference>
<dbReference type="InterPro" id="IPR015947">
    <property type="entry name" value="PUA-like_sf"/>
</dbReference>
<dbReference type="NCBIfam" id="NF003443">
    <property type="entry name" value="PRK04980.1"/>
    <property type="match status" value="1"/>
</dbReference>
<dbReference type="PANTHER" id="PTHR38088">
    <property type="entry name" value="UCP029143 FAMILY PROTEIN"/>
    <property type="match status" value="1"/>
</dbReference>
<dbReference type="PANTHER" id="PTHR38088:SF2">
    <property type="entry name" value="UCP029143 FAMILY PROTEIN"/>
    <property type="match status" value="1"/>
</dbReference>
<dbReference type="Pfam" id="PF04266">
    <property type="entry name" value="ASCH"/>
    <property type="match status" value="1"/>
</dbReference>
<dbReference type="PIRSF" id="PIRSF029143">
    <property type="entry name" value="UCP029143"/>
    <property type="match status" value="1"/>
</dbReference>
<dbReference type="SMART" id="SM01022">
    <property type="entry name" value="ASCH"/>
    <property type="match status" value="1"/>
</dbReference>
<dbReference type="SUPFAM" id="SSF88697">
    <property type="entry name" value="PUA domain-like"/>
    <property type="match status" value="1"/>
</dbReference>
<name>AC4CH_SHESR</name>
<reference key="1">
    <citation type="submission" date="2006-08" db="EMBL/GenBank/DDBJ databases">
        <title>Complete sequence of chromosome 1 of Shewanella sp. MR-7.</title>
        <authorList>
            <person name="Copeland A."/>
            <person name="Lucas S."/>
            <person name="Lapidus A."/>
            <person name="Barry K."/>
            <person name="Detter J.C."/>
            <person name="Glavina del Rio T."/>
            <person name="Hammon N."/>
            <person name="Israni S."/>
            <person name="Dalin E."/>
            <person name="Tice H."/>
            <person name="Pitluck S."/>
            <person name="Kiss H."/>
            <person name="Brettin T."/>
            <person name="Bruce D."/>
            <person name="Han C."/>
            <person name="Tapia R."/>
            <person name="Gilna P."/>
            <person name="Schmutz J."/>
            <person name="Larimer F."/>
            <person name="Land M."/>
            <person name="Hauser L."/>
            <person name="Kyrpides N."/>
            <person name="Mikhailova N."/>
            <person name="Nealson K."/>
            <person name="Konstantinidis K."/>
            <person name="Klappenbach J."/>
            <person name="Tiedje J."/>
            <person name="Richardson P."/>
        </authorList>
    </citation>
    <scope>NUCLEOTIDE SEQUENCE [LARGE SCALE GENOMIC DNA]</scope>
    <source>
        <strain>MR-7</strain>
    </source>
</reference>
<accession>Q0HW12</accession>
<evidence type="ECO:0000255" key="1"/>
<evidence type="ECO:0000255" key="2">
    <source>
        <dbReference type="HAMAP-Rule" id="MF_00684"/>
    </source>
</evidence>
<comment type="function">
    <text evidence="2">Catalyzes the hydrolysis of N(4)-acetylcytidine (ac4C).</text>
</comment>
<comment type="catalytic activity">
    <reaction evidence="2">
        <text>N(4)-acetylcytidine + H2O = cytidine + acetate + H(+)</text>
        <dbReference type="Rhea" id="RHEA:62932"/>
        <dbReference type="ChEBI" id="CHEBI:15377"/>
        <dbReference type="ChEBI" id="CHEBI:15378"/>
        <dbReference type="ChEBI" id="CHEBI:17562"/>
        <dbReference type="ChEBI" id="CHEBI:30089"/>
        <dbReference type="ChEBI" id="CHEBI:70989"/>
        <dbReference type="EC" id="3.5.1.135"/>
    </reaction>
</comment>
<comment type="catalytic activity">
    <reaction evidence="2">
        <text>N(4)-acetyl-2'-deoxycytidine + H2O = 2'-deoxycytidine + acetate + H(+)</text>
        <dbReference type="Rhea" id="RHEA:62936"/>
        <dbReference type="ChEBI" id="CHEBI:15377"/>
        <dbReference type="ChEBI" id="CHEBI:15378"/>
        <dbReference type="ChEBI" id="CHEBI:15698"/>
        <dbReference type="ChEBI" id="CHEBI:30089"/>
        <dbReference type="ChEBI" id="CHEBI:146133"/>
        <dbReference type="EC" id="3.5.1.135"/>
    </reaction>
</comment>
<comment type="catalytic activity">
    <reaction evidence="2">
        <text>N(4)-acetylcytosine + H2O = cytosine + acetate + H(+)</text>
        <dbReference type="Rhea" id="RHEA:62940"/>
        <dbReference type="ChEBI" id="CHEBI:15377"/>
        <dbReference type="ChEBI" id="CHEBI:15378"/>
        <dbReference type="ChEBI" id="CHEBI:16040"/>
        <dbReference type="ChEBI" id="CHEBI:30089"/>
        <dbReference type="ChEBI" id="CHEBI:146134"/>
        <dbReference type="EC" id="3.5.1.135"/>
    </reaction>
</comment>
<comment type="similarity">
    <text evidence="2">Belongs to the N(4)-acetylcytidine amidohydrolase family.</text>
</comment>
<sequence length="103" mass="11858">MLTKITFFERFEPGILSGAKTITLRDEAESHVFAGQILPVSTFEADRWFCDIEVIDIVPVLFSALTEQHAAQENMTLPELRRVIQEIYPGLEQLFQIRFCLVQ</sequence>
<protein>
    <recommendedName>
        <fullName evidence="2">N(4)-acetylcytidine amidohydrolase</fullName>
        <shortName evidence="2">ac4C amidohydrolase</shortName>
        <ecNumber evidence="2">3.5.1.135</ecNumber>
    </recommendedName>
</protein>
<feature type="chain" id="PRO_1000044958" description="N(4)-acetylcytidine amidohydrolase">
    <location>
        <begin position="1"/>
        <end position="103"/>
    </location>
</feature>
<feature type="domain" description="ASCH" evidence="1">
    <location>
        <begin position="6"/>
        <end position="92"/>
    </location>
</feature>
<feature type="active site" description="Proton acceptor" evidence="2">
    <location>
        <position position="20"/>
    </location>
</feature>
<feature type="active site" description="Nucleophile" evidence="2">
    <location>
        <position position="23"/>
    </location>
</feature>
<feature type="active site" description="Proton donor" evidence="2">
    <location>
        <position position="73"/>
    </location>
</feature>
<keyword id="KW-0378">Hydrolase</keyword>
<proteinExistence type="inferred from homology"/>
<organism>
    <name type="scientific">Shewanella sp. (strain MR-7)</name>
    <dbReference type="NCBI Taxonomy" id="60481"/>
    <lineage>
        <taxon>Bacteria</taxon>
        <taxon>Pseudomonadati</taxon>
        <taxon>Pseudomonadota</taxon>
        <taxon>Gammaproteobacteria</taxon>
        <taxon>Alteromonadales</taxon>
        <taxon>Shewanellaceae</taxon>
        <taxon>Shewanella</taxon>
    </lineage>
</organism>
<gene>
    <name type="ordered locus">Shewmr7_1700</name>
</gene>